<protein>
    <recommendedName>
        <fullName evidence="1">Phenylalanine--tRNA ligase alpha subunit</fullName>
        <ecNumber evidence="1">6.1.1.20</ecNumber>
    </recommendedName>
    <alternativeName>
        <fullName evidence="1">Phenylalanyl-tRNA synthetase alpha subunit</fullName>
        <shortName evidence="1">PheRS</shortName>
    </alternativeName>
</protein>
<dbReference type="EC" id="6.1.1.20" evidence="1"/>
<dbReference type="EMBL" id="AE016828">
    <property type="protein sequence ID" value="AAO90826.1"/>
    <property type="molecule type" value="Genomic_DNA"/>
</dbReference>
<dbReference type="RefSeq" id="NP_820312.1">
    <property type="nucleotide sequence ID" value="NC_002971.4"/>
</dbReference>
<dbReference type="RefSeq" id="WP_010958149.1">
    <property type="nucleotide sequence ID" value="NC_002971.4"/>
</dbReference>
<dbReference type="SMR" id="Q83C14"/>
<dbReference type="STRING" id="227377.CBU_1322"/>
<dbReference type="DNASU" id="1209228"/>
<dbReference type="EnsemblBacteria" id="AAO90826">
    <property type="protein sequence ID" value="AAO90826"/>
    <property type="gene ID" value="CBU_1322"/>
</dbReference>
<dbReference type="GeneID" id="1209228"/>
<dbReference type="KEGG" id="cbu:CBU_1322"/>
<dbReference type="PATRIC" id="fig|227377.7.peg.1313"/>
<dbReference type="eggNOG" id="COG0016">
    <property type="taxonomic scope" value="Bacteria"/>
</dbReference>
<dbReference type="HOGENOM" id="CLU_025086_0_1_6"/>
<dbReference type="OrthoDB" id="9800719at2"/>
<dbReference type="Proteomes" id="UP000002671">
    <property type="component" value="Chromosome"/>
</dbReference>
<dbReference type="GO" id="GO:0005737">
    <property type="term" value="C:cytoplasm"/>
    <property type="evidence" value="ECO:0000318"/>
    <property type="project" value="GO_Central"/>
</dbReference>
<dbReference type="GO" id="GO:0005524">
    <property type="term" value="F:ATP binding"/>
    <property type="evidence" value="ECO:0007669"/>
    <property type="project" value="UniProtKB-UniRule"/>
</dbReference>
<dbReference type="GO" id="GO:0000287">
    <property type="term" value="F:magnesium ion binding"/>
    <property type="evidence" value="ECO:0007669"/>
    <property type="project" value="UniProtKB-UniRule"/>
</dbReference>
<dbReference type="GO" id="GO:0004826">
    <property type="term" value="F:phenylalanine-tRNA ligase activity"/>
    <property type="evidence" value="ECO:0000318"/>
    <property type="project" value="GO_Central"/>
</dbReference>
<dbReference type="GO" id="GO:0000049">
    <property type="term" value="F:tRNA binding"/>
    <property type="evidence" value="ECO:0007669"/>
    <property type="project" value="InterPro"/>
</dbReference>
<dbReference type="GO" id="GO:0006432">
    <property type="term" value="P:phenylalanyl-tRNA aminoacylation"/>
    <property type="evidence" value="ECO:0000318"/>
    <property type="project" value="GO_Central"/>
</dbReference>
<dbReference type="CDD" id="cd00496">
    <property type="entry name" value="PheRS_alpha_core"/>
    <property type="match status" value="1"/>
</dbReference>
<dbReference type="FunFam" id="3.30.930.10:FF:000003">
    <property type="entry name" value="Phenylalanine--tRNA ligase alpha subunit"/>
    <property type="match status" value="1"/>
</dbReference>
<dbReference type="Gene3D" id="3.30.930.10">
    <property type="entry name" value="Bira Bifunctional Protein, Domain 2"/>
    <property type="match status" value="1"/>
</dbReference>
<dbReference type="HAMAP" id="MF_00281">
    <property type="entry name" value="Phe_tRNA_synth_alpha1"/>
    <property type="match status" value="1"/>
</dbReference>
<dbReference type="InterPro" id="IPR006195">
    <property type="entry name" value="aa-tRNA-synth_II"/>
</dbReference>
<dbReference type="InterPro" id="IPR045864">
    <property type="entry name" value="aa-tRNA-synth_II/BPL/LPL"/>
</dbReference>
<dbReference type="InterPro" id="IPR004529">
    <property type="entry name" value="Phe-tRNA-synth_IIc_asu"/>
</dbReference>
<dbReference type="InterPro" id="IPR004188">
    <property type="entry name" value="Phe-tRNA_ligase_II_N"/>
</dbReference>
<dbReference type="InterPro" id="IPR022911">
    <property type="entry name" value="Phe_tRNA_ligase_alpha1_bac"/>
</dbReference>
<dbReference type="InterPro" id="IPR002319">
    <property type="entry name" value="Phenylalanyl-tRNA_Synthase"/>
</dbReference>
<dbReference type="InterPro" id="IPR010978">
    <property type="entry name" value="tRNA-bd_arm"/>
</dbReference>
<dbReference type="NCBIfam" id="TIGR00468">
    <property type="entry name" value="pheS"/>
    <property type="match status" value="1"/>
</dbReference>
<dbReference type="PANTHER" id="PTHR11538:SF41">
    <property type="entry name" value="PHENYLALANINE--TRNA LIGASE, MITOCHONDRIAL"/>
    <property type="match status" value="1"/>
</dbReference>
<dbReference type="PANTHER" id="PTHR11538">
    <property type="entry name" value="PHENYLALANYL-TRNA SYNTHETASE"/>
    <property type="match status" value="1"/>
</dbReference>
<dbReference type="Pfam" id="PF02912">
    <property type="entry name" value="Phe_tRNA-synt_N"/>
    <property type="match status" value="1"/>
</dbReference>
<dbReference type="Pfam" id="PF01409">
    <property type="entry name" value="tRNA-synt_2d"/>
    <property type="match status" value="1"/>
</dbReference>
<dbReference type="SUPFAM" id="SSF55681">
    <property type="entry name" value="Class II aaRS and biotin synthetases"/>
    <property type="match status" value="1"/>
</dbReference>
<dbReference type="SUPFAM" id="SSF46589">
    <property type="entry name" value="tRNA-binding arm"/>
    <property type="match status" value="1"/>
</dbReference>
<dbReference type="PROSITE" id="PS50862">
    <property type="entry name" value="AA_TRNA_LIGASE_II"/>
    <property type="match status" value="1"/>
</dbReference>
<gene>
    <name evidence="1" type="primary">pheS</name>
    <name type="ordered locus">CBU_1322</name>
</gene>
<sequence>MQNQLNALLQSAKKSVADAQSEIVLEEIRVDYLGKKGKLTELLKSVGQMPADQRPLLGKAVNEIKREIQQLLNAKSTQLREKSLQEKLNKEKVDITLRGRYDHLGAIHPISRVSERVSQLFSMLGFQIAEGPEIENEYYNFEALNIPADHPARTMADTFYFSGDKLLRTHTSPVQIREMEKQGVPIRLIALGRVYRRDLDQTHTPMFHQVEGLVIDKRSTFANLKGLLQQFLNCFFEKDVRLRFRPSYFPFTEPSAEVDIYQPRTDKWLEVLGCGMVHPNVLRNLNIDPDEYSGFAFGIGLDRLAMLRYEVTDLRLFFENDLRFLGQF</sequence>
<feature type="chain" id="PRO_0000126697" description="Phenylalanine--tRNA ligase alpha subunit">
    <location>
        <begin position="1"/>
        <end position="328"/>
    </location>
</feature>
<feature type="binding site" evidence="1">
    <location>
        <position position="253"/>
    </location>
    <ligand>
        <name>Mg(2+)</name>
        <dbReference type="ChEBI" id="CHEBI:18420"/>
        <note>shared with beta subunit</note>
    </ligand>
</feature>
<evidence type="ECO:0000255" key="1">
    <source>
        <dbReference type="HAMAP-Rule" id="MF_00281"/>
    </source>
</evidence>
<comment type="catalytic activity">
    <reaction evidence="1">
        <text>tRNA(Phe) + L-phenylalanine + ATP = L-phenylalanyl-tRNA(Phe) + AMP + diphosphate + H(+)</text>
        <dbReference type="Rhea" id="RHEA:19413"/>
        <dbReference type="Rhea" id="RHEA-COMP:9668"/>
        <dbReference type="Rhea" id="RHEA-COMP:9699"/>
        <dbReference type="ChEBI" id="CHEBI:15378"/>
        <dbReference type="ChEBI" id="CHEBI:30616"/>
        <dbReference type="ChEBI" id="CHEBI:33019"/>
        <dbReference type="ChEBI" id="CHEBI:58095"/>
        <dbReference type="ChEBI" id="CHEBI:78442"/>
        <dbReference type="ChEBI" id="CHEBI:78531"/>
        <dbReference type="ChEBI" id="CHEBI:456215"/>
        <dbReference type="EC" id="6.1.1.20"/>
    </reaction>
</comment>
<comment type="cofactor">
    <cofactor evidence="1">
        <name>Mg(2+)</name>
        <dbReference type="ChEBI" id="CHEBI:18420"/>
    </cofactor>
    <text evidence="1">Binds 2 magnesium ions per tetramer.</text>
</comment>
<comment type="subunit">
    <text evidence="1">Tetramer of two alpha and two beta subunits.</text>
</comment>
<comment type="subcellular location">
    <subcellularLocation>
        <location evidence="1">Cytoplasm</location>
    </subcellularLocation>
</comment>
<comment type="similarity">
    <text evidence="1">Belongs to the class-II aminoacyl-tRNA synthetase family. Phe-tRNA synthetase alpha subunit type 1 subfamily.</text>
</comment>
<reference key="1">
    <citation type="journal article" date="2003" name="Proc. Natl. Acad. Sci. U.S.A.">
        <title>Complete genome sequence of the Q-fever pathogen, Coxiella burnetii.</title>
        <authorList>
            <person name="Seshadri R."/>
            <person name="Paulsen I.T."/>
            <person name="Eisen J.A."/>
            <person name="Read T.D."/>
            <person name="Nelson K.E."/>
            <person name="Nelson W.C."/>
            <person name="Ward N.L."/>
            <person name="Tettelin H."/>
            <person name="Davidsen T.M."/>
            <person name="Beanan M.J."/>
            <person name="DeBoy R.T."/>
            <person name="Daugherty S.C."/>
            <person name="Brinkac L.M."/>
            <person name="Madupu R."/>
            <person name="Dodson R.J."/>
            <person name="Khouri H.M."/>
            <person name="Lee K.H."/>
            <person name="Carty H.A."/>
            <person name="Scanlan D."/>
            <person name="Heinzen R.A."/>
            <person name="Thompson H.A."/>
            <person name="Samuel J.E."/>
            <person name="Fraser C.M."/>
            <person name="Heidelberg J.F."/>
        </authorList>
    </citation>
    <scope>NUCLEOTIDE SEQUENCE [LARGE SCALE GENOMIC DNA]</scope>
    <source>
        <strain>RSA 493 / Nine Mile phase I</strain>
    </source>
</reference>
<name>SYFA_COXBU</name>
<keyword id="KW-0030">Aminoacyl-tRNA synthetase</keyword>
<keyword id="KW-0067">ATP-binding</keyword>
<keyword id="KW-0963">Cytoplasm</keyword>
<keyword id="KW-0436">Ligase</keyword>
<keyword id="KW-0460">Magnesium</keyword>
<keyword id="KW-0479">Metal-binding</keyword>
<keyword id="KW-0547">Nucleotide-binding</keyword>
<keyword id="KW-0648">Protein biosynthesis</keyword>
<keyword id="KW-1185">Reference proteome</keyword>
<organism>
    <name type="scientific">Coxiella burnetii (strain RSA 493 / Nine Mile phase I)</name>
    <dbReference type="NCBI Taxonomy" id="227377"/>
    <lineage>
        <taxon>Bacteria</taxon>
        <taxon>Pseudomonadati</taxon>
        <taxon>Pseudomonadota</taxon>
        <taxon>Gammaproteobacteria</taxon>
        <taxon>Legionellales</taxon>
        <taxon>Coxiellaceae</taxon>
        <taxon>Coxiella</taxon>
    </lineage>
</organism>
<proteinExistence type="inferred from homology"/>
<accession>Q83C14</accession>